<organism>
    <name type="scientific">Homo sapiens</name>
    <name type="common">Human</name>
    <dbReference type="NCBI Taxonomy" id="9606"/>
    <lineage>
        <taxon>Eukaryota</taxon>
        <taxon>Metazoa</taxon>
        <taxon>Chordata</taxon>
        <taxon>Craniata</taxon>
        <taxon>Vertebrata</taxon>
        <taxon>Euteleostomi</taxon>
        <taxon>Mammalia</taxon>
        <taxon>Eutheria</taxon>
        <taxon>Euarchontoglires</taxon>
        <taxon>Primates</taxon>
        <taxon>Haplorrhini</taxon>
        <taxon>Catarrhini</taxon>
        <taxon>Hominidae</taxon>
        <taxon>Homo</taxon>
    </lineage>
</organism>
<comment type="function">
    <text evidence="1 8">May play a critical role in the development of respiratory control mechanisms and in the normal growth and maturation of the lung. Binds preferentially to methylated DNA (PubMed:28473536).</text>
</comment>
<comment type="interaction">
    <interactant intactId="EBI-2865388">
        <id>Q969G2</id>
    </interactant>
    <interactant intactId="EBI-752365">
        <id>P36404</id>
        <label>ARL2</label>
    </interactant>
    <organismsDiffer>false</organismsDiffer>
    <experiments>3</experiments>
</comment>
<comment type="interaction">
    <interactant intactId="EBI-2865388">
        <id>Q969G2</id>
    </interactant>
    <interactant intactId="EBI-710484">
        <id>O15169</id>
        <label>AXIN1</label>
    </interactant>
    <organismsDiffer>false</organismsDiffer>
    <experiments>3</experiments>
</comment>
<comment type="interaction">
    <interactant intactId="EBI-2865388">
        <id>Q969G2</id>
    </interactant>
    <interactant intactId="EBI-11524452">
        <id>Q8N9N5-2</id>
        <label>BANP</label>
    </interactant>
    <organismsDiffer>false</organismsDiffer>
    <experiments>3</experiments>
</comment>
<comment type="interaction">
    <interactant intactId="EBI-2865388">
        <id>Q969G2</id>
    </interactant>
    <interactant intactId="EBI-12118438">
        <id>Q8IYS8</id>
        <label>BOD1L2</label>
    </interactant>
    <organismsDiffer>false</organismsDiffer>
    <experiments>3</experiments>
</comment>
<comment type="interaction">
    <interactant intactId="EBI-2865388">
        <id>Q969G2</id>
    </interactant>
    <interactant intactId="EBI-1245761">
        <id>Q00526</id>
        <label>CDK3</label>
    </interactant>
    <organismsDiffer>false</organismsDiffer>
    <experiments>3</experiments>
</comment>
<comment type="interaction">
    <interactant intactId="EBI-2865388">
        <id>Q969G2</id>
    </interactant>
    <interactant intactId="EBI-5529649">
        <id>Q8N2Z9</id>
        <label>CENPS</label>
    </interactant>
    <organismsDiffer>false</organismsDiffer>
    <experiments>3</experiments>
</comment>
<comment type="interaction">
    <interactant intactId="EBI-2865388">
        <id>Q969G2</id>
    </interactant>
    <interactant intactId="EBI-2321769">
        <id>Q9Y6H1</id>
        <label>CHCHD2</label>
    </interactant>
    <organismsDiffer>false</organismsDiffer>
    <experiments>4</experiments>
</comment>
<comment type="interaction">
    <interactant intactId="EBI-2865388">
        <id>Q969G2</id>
    </interactant>
    <interactant intactId="EBI-351152">
        <id>Q9BR76</id>
        <label>CORO1B</label>
    </interactant>
    <organismsDiffer>false</organismsDiffer>
    <experiments>3</experiments>
</comment>
<comment type="interaction">
    <interactant intactId="EBI-2865388">
        <id>Q969G2</id>
    </interactant>
    <interactant intactId="EBI-723230">
        <id>Q5QP82</id>
        <label>DCAF10</label>
    </interactant>
    <organismsDiffer>false</organismsDiffer>
    <experiments>3</experiments>
</comment>
<comment type="interaction">
    <interactant intactId="EBI-2865388">
        <id>Q969G2</id>
    </interactant>
    <interactant intactId="EBI-746300">
        <id>Q96LJ7</id>
        <label>DHRS1</label>
    </interactant>
    <organismsDiffer>false</organismsDiffer>
    <experiments>3</experiments>
</comment>
<comment type="interaction">
    <interactant intactId="EBI-2865388">
        <id>Q969G2</id>
    </interactant>
    <interactant intactId="EBI-11514233">
        <id>P59910</id>
        <label>DNAJB13</label>
    </interactant>
    <organismsDiffer>false</organismsDiffer>
    <experiments>3</experiments>
</comment>
<comment type="interaction">
    <interactant intactId="EBI-2865388">
        <id>Q969G2</id>
    </interactant>
    <interactant intactId="EBI-2564539">
        <id>Q96HE7</id>
        <label>ERO1A</label>
    </interactant>
    <organismsDiffer>false</organismsDiffer>
    <experiments>3</experiments>
</comment>
<comment type="interaction">
    <interactant intactId="EBI-2865388">
        <id>Q969G2</id>
    </interactant>
    <interactant intactId="EBI-10252800">
        <id>Q6P4F2</id>
        <label>FDX2</label>
    </interactant>
    <organismsDiffer>false</organismsDiffer>
    <experiments>3</experiments>
</comment>
<comment type="interaction">
    <interactant intactId="EBI-2865388">
        <id>Q969G2</id>
    </interactant>
    <interactant intactId="EBI-11955357">
        <id>Q00444</id>
        <label>HOXC5</label>
    </interactant>
    <organismsDiffer>false</organismsDiffer>
    <experiments>3</experiments>
</comment>
<comment type="interaction">
    <interactant intactId="EBI-2865388">
        <id>Q969G2</id>
    </interactant>
    <interactant intactId="EBI-715611">
        <id>Q9C086</id>
        <label>INO80B</label>
    </interactant>
    <organismsDiffer>false</organismsDiffer>
    <experiments>3</experiments>
</comment>
<comment type="interaction">
    <interactant intactId="EBI-2865388">
        <id>Q969G2</id>
    </interactant>
    <interactant intactId="EBI-3906896">
        <id>P61371</id>
        <label>ISL1</label>
    </interactant>
    <organismsDiffer>false</organismsDiffer>
    <experiments>4</experiments>
</comment>
<comment type="interaction">
    <interactant intactId="EBI-2865388">
        <id>Q969G2</id>
    </interactant>
    <interactant intactId="EBI-18560216">
        <id>Q96A47</id>
        <label>ISL2</label>
    </interactant>
    <organismsDiffer>false</organismsDiffer>
    <experiments>5</experiments>
</comment>
<comment type="interaction">
    <interactant intactId="EBI-2865388">
        <id>Q969G2</id>
    </interactant>
    <interactant intactId="EBI-6426443">
        <id>Q2WGJ6</id>
        <label>KLHL38</label>
    </interactant>
    <organismsDiffer>false</organismsDiffer>
    <experiments>3</experiments>
</comment>
<comment type="interaction">
    <interactant intactId="EBI-2865388">
        <id>Q969G2</id>
    </interactant>
    <interactant intactId="EBI-11979761">
        <id>Q86U70-2</id>
        <label>LDB1</label>
    </interactant>
    <organismsDiffer>false</organismsDiffer>
    <experiments>4</experiments>
</comment>
<comment type="interaction">
    <interactant intactId="EBI-2865388">
        <id>Q969G2</id>
    </interactant>
    <interactant intactId="EBI-2341787">
        <id>Q17RB8</id>
        <label>LONRF1</label>
    </interactant>
    <organismsDiffer>false</organismsDiffer>
    <experiments>3</experiments>
</comment>
<comment type="interaction">
    <interactant intactId="EBI-2865388">
        <id>Q969G2</id>
    </interactant>
    <interactant intactId="EBI-726739">
        <id>Q9UPY8</id>
        <label>MAPRE3</label>
    </interactant>
    <organismsDiffer>false</organismsDiffer>
    <experiments>3</experiments>
</comment>
<comment type="interaction">
    <interactant intactId="EBI-2865388">
        <id>Q969G2</id>
    </interactant>
    <interactant intactId="EBI-13374520">
        <id>Q9HD23-2</id>
        <label>MRS2</label>
    </interactant>
    <organismsDiffer>false</organismsDiffer>
    <experiments>3</experiments>
</comment>
<comment type="interaction">
    <interactant intactId="EBI-2865388">
        <id>Q969G2</id>
    </interactant>
    <interactant intactId="EBI-744402">
        <id>Q9NP98</id>
        <label>MYOZ1</label>
    </interactant>
    <organismsDiffer>false</organismsDiffer>
    <experiments>3</experiments>
</comment>
<comment type="interaction">
    <interactant intactId="EBI-2865388">
        <id>Q969G2</id>
    </interactant>
    <interactant intactId="EBI-374840">
        <id>Q9Y5N6</id>
        <label>ORC6</label>
    </interactant>
    <organismsDiffer>false</organismsDiffer>
    <experiments>8</experiments>
</comment>
<comment type="interaction">
    <interactant intactId="EBI-2865388">
        <id>Q969G2</id>
    </interactant>
    <interactant intactId="EBI-17644640">
        <id>Q9NR21-1</id>
        <label>PARP11</label>
    </interactant>
    <organismsDiffer>false</organismsDiffer>
    <experiments>3</experiments>
</comment>
<comment type="interaction">
    <interactant intactId="EBI-2865388">
        <id>Q969G2</id>
    </interactant>
    <interactant intactId="EBI-8673859">
        <id>P28069</id>
        <label>POU1F1</label>
    </interactant>
    <organismsDiffer>false</organismsDiffer>
    <experiments>3</experiments>
</comment>
<comment type="interaction">
    <interactant intactId="EBI-2865388">
        <id>Q969G2</id>
    </interactant>
    <interactant intactId="EBI-2798044">
        <id>Q2TAL8</id>
        <label>QRICH1</label>
    </interactant>
    <organismsDiffer>false</organismsDiffer>
    <experiments>3</experiments>
</comment>
<comment type="interaction">
    <interactant intactId="EBI-2865388">
        <id>Q969G2</id>
    </interactant>
    <interactant intactId="EBI-745846">
        <id>P57086</id>
        <label>SCAND1</label>
    </interactant>
    <organismsDiffer>false</organismsDiffer>
    <experiments>3</experiments>
</comment>
<comment type="interaction">
    <interactant intactId="EBI-2865388">
        <id>Q969G2</id>
    </interactant>
    <interactant intactId="EBI-6983382">
        <id>O60880</id>
        <label>SH2D1A</label>
    </interactant>
    <organismsDiffer>false</organismsDiffer>
    <experiments>7</experiments>
</comment>
<comment type="interaction">
    <interactant intactId="EBI-2865388">
        <id>Q969G2</id>
    </interactant>
    <interactant intactId="EBI-9675976">
        <id>Q9BV90</id>
        <label>SNRNP25</label>
    </interactant>
    <organismsDiffer>false</organismsDiffer>
    <experiments>6</experiments>
</comment>
<comment type="interaction">
    <interactant intactId="EBI-2865388">
        <id>Q969G2</id>
    </interactant>
    <interactant intactId="EBI-607085">
        <id>P09012</id>
        <label>SNRPA</label>
    </interactant>
    <organismsDiffer>false</organismsDiffer>
    <experiments>3</experiments>
</comment>
<comment type="interaction">
    <interactant intactId="EBI-2865388">
        <id>Q969G2</id>
    </interactant>
    <interactant intactId="EBI-8451480">
        <id>O75865-2</id>
        <label>TRAPPC6A</label>
    </interactant>
    <organismsDiffer>false</organismsDiffer>
    <experiments>3</experiments>
</comment>
<comment type="interaction">
    <interactant intactId="EBI-2865388">
        <id>Q969G2</id>
    </interactant>
    <interactant intactId="EBI-2515608">
        <id>Q7Z4G4</id>
        <label>TRMT11</label>
    </interactant>
    <organismsDiffer>false</organismsDiffer>
    <experiments>3</experiments>
</comment>
<comment type="interaction">
    <interactant intactId="EBI-2865388">
        <id>Q969G2</id>
    </interactant>
    <interactant intactId="EBI-2559824">
        <id>Q7Z6J9</id>
        <label>TSEN54</label>
    </interactant>
    <organismsDiffer>false</organismsDiffer>
    <experiments>3</experiments>
</comment>
<comment type="interaction">
    <interactant intactId="EBI-2865388">
        <id>Q969G2</id>
    </interactant>
    <interactant intactId="EBI-8994397">
        <id>Q5T7W7</id>
        <label>TSTD2</label>
    </interactant>
    <organismsDiffer>false</organismsDiffer>
    <experiments>3</experiments>
</comment>
<comment type="interaction">
    <interactant intactId="EBI-2865388">
        <id>Q969G2</id>
    </interactant>
    <interactant intactId="EBI-2825190">
        <id>Q86UY0</id>
        <label>TXNDC5</label>
    </interactant>
    <organismsDiffer>false</organismsDiffer>
    <experiments>3</experiments>
</comment>
<comment type="interaction">
    <interactant intactId="EBI-2865388">
        <id>Q969G2</id>
    </interactant>
    <interactant intactId="EBI-743272">
        <id>O75604</id>
        <label>USP2</label>
    </interactant>
    <organismsDiffer>false</organismsDiffer>
    <experiments>4</experiments>
</comment>
<comment type="interaction">
    <interactant intactId="EBI-2865388">
        <id>Q969G2</id>
    </interactant>
    <interactant intactId="EBI-712969">
        <id>Q9Y3C0</id>
        <label>WASHC3</label>
    </interactant>
    <organismsDiffer>false</organismsDiffer>
    <experiments>3</experiments>
</comment>
<comment type="interaction">
    <interactant intactId="EBI-2865388">
        <id>Q969G2</id>
    </interactant>
    <interactant intactId="EBI-765538">
        <id>P25490</id>
        <label>YY1</label>
    </interactant>
    <organismsDiffer>false</organismsDiffer>
    <experiments>4</experiments>
</comment>
<comment type="interaction">
    <interactant intactId="EBI-2865388">
        <id>Q969G2</id>
    </interactant>
    <interactant intactId="EBI-2515601">
        <id>Q8N680</id>
        <label>ZBTB2</label>
    </interactant>
    <organismsDiffer>false</organismsDiffer>
    <experiments>3</experiments>
</comment>
<comment type="interaction">
    <interactant intactId="EBI-2865388">
        <id>Q969G2</id>
    </interactant>
    <interactant intactId="EBI-7254550">
        <id>P36508</id>
        <label>ZNF76</label>
    </interactant>
    <organismsDiffer>false</organismsDiffer>
    <experiments>3</experiments>
</comment>
<comment type="subcellular location">
    <subcellularLocation>
        <location evidence="2">Nucleus</location>
    </subcellularLocation>
</comment>
<comment type="disease" evidence="6 7">
    <disease id="DI-02299">
        <name>Pituitary hormone deficiency, combined, 4</name>
        <acronym>CPHD4</acronym>
        <description>Combined pituitary hormone deficiency is defined as the impaired production of growth hormone and one or more of the other five anterior pituitary hormones. CPHD4 is characterized by complete or partial deficiencies of growth hormone, thyroid-stimulating hormone, luteinizing hormone, follicle stimulating hormone and adrenocorticotropic hormone. Clinical features include short stature, cerebellar defects, and small sella turcica.</description>
        <dbReference type="MIM" id="262700"/>
    </disease>
    <text>The disease is caused by variants affecting the gene represented in this entry.</text>
</comment>
<comment type="disease">
    <text evidence="5">A chromosomal aberration involving LHX4 may be a cause of acute lymphoblastic leukemia. Translocation t(1;14)(q25;q32) with IGHG1.</text>
</comment>
<comment type="sequence caution" evidence="9">
    <conflict type="erroneous initiation">
        <sequence resource="EMBL-CDS" id="BAB62817"/>
    </conflict>
    <text>Truncated N-terminus.</text>
</comment>
<dbReference type="EMBL" id="AY053457">
    <property type="protein sequence ID" value="AAL07260.1"/>
    <property type="molecule type" value="mRNA"/>
</dbReference>
<dbReference type="EMBL" id="AF179849">
    <property type="protein sequence ID" value="AAK70923.1"/>
    <property type="molecule type" value="mRNA"/>
</dbReference>
<dbReference type="EMBL" id="AF405430">
    <property type="protein sequence ID" value="AAM91896.1"/>
    <property type="molecule type" value="Genomic_DNA"/>
</dbReference>
<dbReference type="EMBL" id="AF405425">
    <property type="protein sequence ID" value="AAM91896.1"/>
    <property type="status" value="JOINED"/>
    <property type="molecule type" value="Genomic_DNA"/>
</dbReference>
<dbReference type="EMBL" id="AF405426">
    <property type="protein sequence ID" value="AAM91896.1"/>
    <property type="status" value="JOINED"/>
    <property type="molecule type" value="Genomic_DNA"/>
</dbReference>
<dbReference type="EMBL" id="AF405427">
    <property type="protein sequence ID" value="AAM91896.1"/>
    <property type="status" value="JOINED"/>
    <property type="molecule type" value="Genomic_DNA"/>
</dbReference>
<dbReference type="EMBL" id="AF405428">
    <property type="protein sequence ID" value="AAM91896.1"/>
    <property type="status" value="JOINED"/>
    <property type="molecule type" value="Genomic_DNA"/>
</dbReference>
<dbReference type="EMBL" id="AF405429">
    <property type="protein sequence ID" value="AAM91896.1"/>
    <property type="status" value="JOINED"/>
    <property type="molecule type" value="Genomic_DNA"/>
</dbReference>
<dbReference type="EMBL" id="AL139141">
    <property type="status" value="NOT_ANNOTATED_CDS"/>
    <property type="molecule type" value="Genomic_DNA"/>
</dbReference>
<dbReference type="EMBL" id="BC011759">
    <property type="protein sequence ID" value="AAH11759.1"/>
    <property type="molecule type" value="mRNA"/>
</dbReference>
<dbReference type="EMBL" id="AB055703">
    <property type="protein sequence ID" value="BAB62817.1"/>
    <property type="status" value="ALT_INIT"/>
    <property type="molecule type" value="mRNA"/>
</dbReference>
<dbReference type="EMBL" id="AB037683">
    <property type="protein sequence ID" value="BAC01272.1"/>
    <property type="molecule type" value="mRNA"/>
</dbReference>
<dbReference type="EMBL" id="AF282899">
    <property type="protein sequence ID" value="AAK69169.1"/>
    <property type="molecule type" value="mRNA"/>
</dbReference>
<dbReference type="EMBL" id="AH011598">
    <property type="protein sequence ID" value="AAM19349.1"/>
    <property type="molecule type" value="Genomic_DNA"/>
</dbReference>
<dbReference type="CCDS" id="CCDS1338.1"/>
<dbReference type="RefSeq" id="NP_203129.1">
    <property type="nucleotide sequence ID" value="NM_033343.4"/>
</dbReference>
<dbReference type="PDB" id="5HOD">
    <property type="method" value="X-ray"/>
    <property type="resolution" value="2.68 A"/>
    <property type="chains" value="A/D=156-216"/>
</dbReference>
<dbReference type="PDBsum" id="5HOD"/>
<dbReference type="SMR" id="Q969G2"/>
<dbReference type="BioGRID" id="124635">
    <property type="interactions" value="167"/>
</dbReference>
<dbReference type="DIP" id="DIP-29454N"/>
<dbReference type="FunCoup" id="Q969G2">
    <property type="interactions" value="940"/>
</dbReference>
<dbReference type="IntAct" id="Q969G2">
    <property type="interactions" value="150"/>
</dbReference>
<dbReference type="MINT" id="Q969G2"/>
<dbReference type="STRING" id="9606.ENSP00000263726"/>
<dbReference type="GlyGen" id="Q969G2">
    <property type="glycosylation" value="1 site"/>
</dbReference>
<dbReference type="iPTMnet" id="Q969G2"/>
<dbReference type="PhosphoSitePlus" id="Q969G2"/>
<dbReference type="BioMuta" id="LHX4"/>
<dbReference type="DMDM" id="209572644"/>
<dbReference type="jPOST" id="Q969G2"/>
<dbReference type="MassIVE" id="Q969G2"/>
<dbReference type="PaxDb" id="9606-ENSP00000263726"/>
<dbReference type="PeptideAtlas" id="Q969G2"/>
<dbReference type="ProteomicsDB" id="75753"/>
<dbReference type="Antibodypedia" id="20587">
    <property type="antibodies" value="395 antibodies from 29 providers"/>
</dbReference>
<dbReference type="DNASU" id="89884"/>
<dbReference type="Ensembl" id="ENST00000263726.4">
    <property type="protein sequence ID" value="ENSP00000263726.2"/>
    <property type="gene ID" value="ENSG00000121454.6"/>
</dbReference>
<dbReference type="GeneID" id="89884"/>
<dbReference type="KEGG" id="hsa:89884"/>
<dbReference type="MANE-Select" id="ENST00000263726.4">
    <property type="protein sequence ID" value="ENSP00000263726.2"/>
    <property type="RefSeq nucleotide sequence ID" value="NM_033343.4"/>
    <property type="RefSeq protein sequence ID" value="NP_203129.1"/>
</dbReference>
<dbReference type="UCSC" id="uc001goe.3">
    <property type="organism name" value="human"/>
</dbReference>
<dbReference type="AGR" id="HGNC:21734"/>
<dbReference type="CTD" id="89884"/>
<dbReference type="DisGeNET" id="89884"/>
<dbReference type="GeneCards" id="LHX4"/>
<dbReference type="HGNC" id="HGNC:21734">
    <property type="gene designation" value="LHX4"/>
</dbReference>
<dbReference type="HPA" id="ENSG00000121454">
    <property type="expression patterns" value="Tissue enriched (retina)"/>
</dbReference>
<dbReference type="MalaCards" id="LHX4"/>
<dbReference type="MIM" id="262700">
    <property type="type" value="phenotype"/>
</dbReference>
<dbReference type="MIM" id="602146">
    <property type="type" value="gene"/>
</dbReference>
<dbReference type="neXtProt" id="NX_Q969G2"/>
<dbReference type="OpenTargets" id="ENSG00000121454"/>
<dbReference type="Orphanet" id="95494">
    <property type="disease" value="Combined pituitary hormone deficiencies, genetic forms"/>
</dbReference>
<dbReference type="Orphanet" id="226307">
    <property type="disease" value="Hypothyroidism due to deficient transcription factors involved in pituitary development or function"/>
</dbReference>
<dbReference type="Orphanet" id="95496">
    <property type="disease" value="Pituitary stalk interruption syndrome"/>
</dbReference>
<dbReference type="Orphanet" id="85442">
    <property type="disease" value="Short stature-pituitary and cerebellar defects-small sella turcica syndrome"/>
</dbReference>
<dbReference type="PharmGKB" id="PA134962876"/>
<dbReference type="VEuPathDB" id="HostDB:ENSG00000121454"/>
<dbReference type="eggNOG" id="KOG4577">
    <property type="taxonomic scope" value="Eukaryota"/>
</dbReference>
<dbReference type="GeneTree" id="ENSGT00940000157906"/>
<dbReference type="HOGENOM" id="CLU_027802_5_0_1"/>
<dbReference type="InParanoid" id="Q969G2"/>
<dbReference type="OMA" id="GLDYTMD"/>
<dbReference type="OrthoDB" id="10068367at2759"/>
<dbReference type="PAN-GO" id="Q969G2">
    <property type="GO annotations" value="5 GO annotations based on evolutionary models"/>
</dbReference>
<dbReference type="PhylomeDB" id="Q969G2"/>
<dbReference type="TreeFam" id="TF315442"/>
<dbReference type="PathwayCommons" id="Q969G2"/>
<dbReference type="Reactome" id="R-HSA-9010553">
    <property type="pathway name" value="Regulation of expression of SLITs and ROBOs"/>
</dbReference>
<dbReference type="SignaLink" id="Q969G2"/>
<dbReference type="SIGNOR" id="Q969G2"/>
<dbReference type="BioGRID-ORCS" id="89884">
    <property type="hits" value="19 hits in 1172 CRISPR screens"/>
</dbReference>
<dbReference type="ChiTaRS" id="LHX4">
    <property type="organism name" value="human"/>
</dbReference>
<dbReference type="GeneWiki" id="LHX4"/>
<dbReference type="GenomeRNAi" id="89884"/>
<dbReference type="Pharos" id="Q969G2">
    <property type="development level" value="Tbio"/>
</dbReference>
<dbReference type="PRO" id="PR:Q969G2"/>
<dbReference type="Proteomes" id="UP000005640">
    <property type="component" value="Chromosome 1"/>
</dbReference>
<dbReference type="RNAct" id="Q969G2">
    <property type="molecule type" value="protein"/>
</dbReference>
<dbReference type="Bgee" id="ENSG00000121454">
    <property type="expression patterns" value="Expressed in buccal mucosa cell and 109 other cell types or tissues"/>
</dbReference>
<dbReference type="ExpressionAtlas" id="Q969G2">
    <property type="expression patterns" value="baseline and differential"/>
</dbReference>
<dbReference type="GO" id="GO:0000785">
    <property type="term" value="C:chromatin"/>
    <property type="evidence" value="ECO:0000247"/>
    <property type="project" value="NTNU_SB"/>
</dbReference>
<dbReference type="GO" id="GO:0005634">
    <property type="term" value="C:nucleus"/>
    <property type="evidence" value="ECO:0000318"/>
    <property type="project" value="GO_Central"/>
</dbReference>
<dbReference type="GO" id="GO:0001228">
    <property type="term" value="F:DNA-binding transcription activator activity, RNA polymerase II-specific"/>
    <property type="evidence" value="ECO:0000314"/>
    <property type="project" value="NTNU_SB"/>
</dbReference>
<dbReference type="GO" id="GO:0000981">
    <property type="term" value="F:DNA-binding transcription factor activity, RNA polymerase II-specific"/>
    <property type="evidence" value="ECO:0000247"/>
    <property type="project" value="NTNU_SB"/>
</dbReference>
<dbReference type="GO" id="GO:0008327">
    <property type="term" value="F:methyl-CpG binding"/>
    <property type="evidence" value="ECO:0000314"/>
    <property type="project" value="UniProtKB"/>
</dbReference>
<dbReference type="GO" id="GO:0000977">
    <property type="term" value="F:RNA polymerase II transcription regulatory region sequence-specific DNA binding"/>
    <property type="evidence" value="ECO:0000318"/>
    <property type="project" value="GO_Central"/>
</dbReference>
<dbReference type="GO" id="GO:0043565">
    <property type="term" value="F:sequence-specific DNA binding"/>
    <property type="evidence" value="ECO:0000314"/>
    <property type="project" value="NTNU_SB"/>
</dbReference>
<dbReference type="GO" id="GO:1990837">
    <property type="term" value="F:sequence-specific double-stranded DNA binding"/>
    <property type="evidence" value="ECO:0000314"/>
    <property type="project" value="ARUK-UCL"/>
</dbReference>
<dbReference type="GO" id="GO:0008270">
    <property type="term" value="F:zinc ion binding"/>
    <property type="evidence" value="ECO:0007669"/>
    <property type="project" value="InterPro"/>
</dbReference>
<dbReference type="GO" id="GO:0009887">
    <property type="term" value="P:animal organ morphogenesis"/>
    <property type="evidence" value="ECO:0007669"/>
    <property type="project" value="Ensembl"/>
</dbReference>
<dbReference type="GO" id="GO:0006915">
    <property type="term" value="P:apoptotic process"/>
    <property type="evidence" value="ECO:0007669"/>
    <property type="project" value="Ensembl"/>
</dbReference>
<dbReference type="GO" id="GO:0021526">
    <property type="term" value="P:medial motor column neuron differentiation"/>
    <property type="evidence" value="ECO:0007669"/>
    <property type="project" value="Ensembl"/>
</dbReference>
<dbReference type="GO" id="GO:0008045">
    <property type="term" value="P:motor neuron axon guidance"/>
    <property type="evidence" value="ECO:0007669"/>
    <property type="project" value="Ensembl"/>
</dbReference>
<dbReference type="GO" id="GO:0043066">
    <property type="term" value="P:negative regulation of apoptotic process"/>
    <property type="evidence" value="ECO:0007669"/>
    <property type="project" value="Ensembl"/>
</dbReference>
<dbReference type="GO" id="GO:0030182">
    <property type="term" value="P:neuron differentiation"/>
    <property type="evidence" value="ECO:0000318"/>
    <property type="project" value="GO_Central"/>
</dbReference>
<dbReference type="GO" id="GO:0001890">
    <property type="term" value="P:placenta development"/>
    <property type="evidence" value="ECO:0007669"/>
    <property type="project" value="Ensembl"/>
</dbReference>
<dbReference type="GO" id="GO:0045944">
    <property type="term" value="P:positive regulation of transcription by RNA polymerase II"/>
    <property type="evidence" value="ECO:0000314"/>
    <property type="project" value="NTNU_SB"/>
</dbReference>
<dbReference type="GO" id="GO:0006357">
    <property type="term" value="P:regulation of transcription by RNA polymerase II"/>
    <property type="evidence" value="ECO:0000318"/>
    <property type="project" value="GO_Central"/>
</dbReference>
<dbReference type="CDD" id="cd00086">
    <property type="entry name" value="homeodomain"/>
    <property type="match status" value="1"/>
</dbReference>
<dbReference type="CDD" id="cd09468">
    <property type="entry name" value="LIM1_Lhx4"/>
    <property type="match status" value="1"/>
</dbReference>
<dbReference type="CDD" id="cd09376">
    <property type="entry name" value="LIM2_Lhx3_Lhx4"/>
    <property type="match status" value="1"/>
</dbReference>
<dbReference type="FunFam" id="2.10.110.10:FF:000120">
    <property type="entry name" value="Insulin gene enhancer protein ISL-2"/>
    <property type="match status" value="1"/>
</dbReference>
<dbReference type="FunFam" id="1.10.10.60:FF:000219">
    <property type="entry name" value="LIM/homeobox protein Lhx3"/>
    <property type="match status" value="1"/>
</dbReference>
<dbReference type="FunFam" id="2.10.110.10:FF:000032">
    <property type="entry name" value="LIM/homeobox protein Lhx3"/>
    <property type="match status" value="1"/>
</dbReference>
<dbReference type="Gene3D" id="2.10.110.10">
    <property type="entry name" value="Cysteine Rich Protein"/>
    <property type="match status" value="2"/>
</dbReference>
<dbReference type="Gene3D" id="1.10.10.60">
    <property type="entry name" value="Homeodomain-like"/>
    <property type="match status" value="1"/>
</dbReference>
<dbReference type="InterPro" id="IPR001356">
    <property type="entry name" value="HD"/>
</dbReference>
<dbReference type="InterPro" id="IPR017970">
    <property type="entry name" value="Homeobox_CS"/>
</dbReference>
<dbReference type="InterPro" id="IPR009057">
    <property type="entry name" value="Homeodomain-like_sf"/>
</dbReference>
<dbReference type="InterPro" id="IPR049594">
    <property type="entry name" value="Lhx3/4-like_LIM2"/>
</dbReference>
<dbReference type="InterPro" id="IPR047956">
    <property type="entry name" value="LHX4_LIM1"/>
</dbReference>
<dbReference type="InterPro" id="IPR050453">
    <property type="entry name" value="LIM_Homeobox_TF"/>
</dbReference>
<dbReference type="InterPro" id="IPR001781">
    <property type="entry name" value="Znf_LIM"/>
</dbReference>
<dbReference type="PANTHER" id="PTHR24208">
    <property type="entry name" value="LIM/HOMEOBOX PROTEIN LHX"/>
    <property type="match status" value="1"/>
</dbReference>
<dbReference type="PANTHER" id="PTHR24208:SF116">
    <property type="entry name" value="LIM_HOMEOBOX PROTEIN LHX4"/>
    <property type="match status" value="1"/>
</dbReference>
<dbReference type="Pfam" id="PF00046">
    <property type="entry name" value="Homeodomain"/>
    <property type="match status" value="1"/>
</dbReference>
<dbReference type="Pfam" id="PF00412">
    <property type="entry name" value="LIM"/>
    <property type="match status" value="2"/>
</dbReference>
<dbReference type="SMART" id="SM00389">
    <property type="entry name" value="HOX"/>
    <property type="match status" value="1"/>
</dbReference>
<dbReference type="SMART" id="SM00132">
    <property type="entry name" value="LIM"/>
    <property type="match status" value="2"/>
</dbReference>
<dbReference type="SUPFAM" id="SSF57716">
    <property type="entry name" value="Glucocorticoid receptor-like (DNA-binding domain)"/>
    <property type="match status" value="2"/>
</dbReference>
<dbReference type="SUPFAM" id="SSF46689">
    <property type="entry name" value="Homeodomain-like"/>
    <property type="match status" value="1"/>
</dbReference>
<dbReference type="PROSITE" id="PS00027">
    <property type="entry name" value="HOMEOBOX_1"/>
    <property type="match status" value="1"/>
</dbReference>
<dbReference type="PROSITE" id="PS50071">
    <property type="entry name" value="HOMEOBOX_2"/>
    <property type="match status" value="1"/>
</dbReference>
<dbReference type="PROSITE" id="PS00478">
    <property type="entry name" value="LIM_DOMAIN_1"/>
    <property type="match status" value="2"/>
</dbReference>
<dbReference type="PROSITE" id="PS50023">
    <property type="entry name" value="LIM_DOMAIN_2"/>
    <property type="match status" value="2"/>
</dbReference>
<proteinExistence type="evidence at protein level"/>
<gene>
    <name type="primary">LHX4</name>
</gene>
<reference key="1">
    <citation type="journal article" date="2002" name="Oncogene">
        <title>A novel chromosomal translocation t(1;14)(q25;q32) in pre-B acute lymphoblastic leukemia involves the LIM homeodomain protein gene, Lhx4.</title>
        <authorList>
            <person name="Kawamata N."/>
            <person name="Sakajiri S."/>
            <person name="Sugimoto K.J."/>
            <person name="Isobe Y."/>
            <person name="Kobayashi H."/>
            <person name="Oshimi K."/>
        </authorList>
    </citation>
    <scope>NUCLEOTIDE SEQUENCE [MRNA]</scope>
    <scope>CHROMOSOMAL TRANSLOCATION WITH IGHG1</scope>
</reference>
<reference key="2">
    <citation type="submission" date="1999-08" db="EMBL/GenBank/DDBJ databases">
        <title>Isolation and cloning of a novel cDNA encoding human LIM homeobox 4 protein.</title>
        <authorList>
            <person name="Liu Y."/>
            <person name="Zhou Y."/>
            <person name="Wang J."/>
            <person name="Yuan J."/>
            <person name="Qiang B."/>
            <person name="Fan M."/>
        </authorList>
    </citation>
    <scope>NUCLEOTIDE SEQUENCE [MRNA]</scope>
</reference>
<reference key="3">
    <citation type="submission" date="2001-08" db="EMBL/GenBank/DDBJ databases">
        <title>Human LIM homeobox protein 4 (LHX4) gene.</title>
        <authorList>
            <person name="Machinis K."/>
            <person name="Pantel J."/>
            <person name="Duquesnoy P."/>
            <person name="Netchine I."/>
            <person name="Sobrier M.-L."/>
            <person name="Dastot F."/>
            <person name="Amselem S."/>
        </authorList>
    </citation>
    <scope>NUCLEOTIDE SEQUENCE [GENOMIC DNA]</scope>
</reference>
<reference key="4">
    <citation type="journal article" date="2006" name="Nature">
        <title>The DNA sequence and biological annotation of human chromosome 1.</title>
        <authorList>
            <person name="Gregory S.G."/>
            <person name="Barlow K.F."/>
            <person name="McLay K.E."/>
            <person name="Kaul R."/>
            <person name="Swarbreck D."/>
            <person name="Dunham A."/>
            <person name="Scott C.E."/>
            <person name="Howe K.L."/>
            <person name="Woodfine K."/>
            <person name="Spencer C.C.A."/>
            <person name="Jones M.C."/>
            <person name="Gillson C."/>
            <person name="Searle S."/>
            <person name="Zhou Y."/>
            <person name="Kokocinski F."/>
            <person name="McDonald L."/>
            <person name="Evans R."/>
            <person name="Phillips K."/>
            <person name="Atkinson A."/>
            <person name="Cooper R."/>
            <person name="Jones C."/>
            <person name="Hall R.E."/>
            <person name="Andrews T.D."/>
            <person name="Lloyd C."/>
            <person name="Ainscough R."/>
            <person name="Almeida J.P."/>
            <person name="Ambrose K.D."/>
            <person name="Anderson F."/>
            <person name="Andrew R.W."/>
            <person name="Ashwell R.I.S."/>
            <person name="Aubin K."/>
            <person name="Babbage A.K."/>
            <person name="Bagguley C.L."/>
            <person name="Bailey J."/>
            <person name="Beasley H."/>
            <person name="Bethel G."/>
            <person name="Bird C.P."/>
            <person name="Bray-Allen S."/>
            <person name="Brown J.Y."/>
            <person name="Brown A.J."/>
            <person name="Buckley D."/>
            <person name="Burton J."/>
            <person name="Bye J."/>
            <person name="Carder C."/>
            <person name="Chapman J.C."/>
            <person name="Clark S.Y."/>
            <person name="Clarke G."/>
            <person name="Clee C."/>
            <person name="Cobley V."/>
            <person name="Collier R.E."/>
            <person name="Corby N."/>
            <person name="Coville G.J."/>
            <person name="Davies J."/>
            <person name="Deadman R."/>
            <person name="Dunn M."/>
            <person name="Earthrowl M."/>
            <person name="Ellington A.G."/>
            <person name="Errington H."/>
            <person name="Frankish A."/>
            <person name="Frankland J."/>
            <person name="French L."/>
            <person name="Garner P."/>
            <person name="Garnett J."/>
            <person name="Gay L."/>
            <person name="Ghori M.R.J."/>
            <person name="Gibson R."/>
            <person name="Gilby L.M."/>
            <person name="Gillett W."/>
            <person name="Glithero R.J."/>
            <person name="Grafham D.V."/>
            <person name="Griffiths C."/>
            <person name="Griffiths-Jones S."/>
            <person name="Grocock R."/>
            <person name="Hammond S."/>
            <person name="Harrison E.S.I."/>
            <person name="Hart E."/>
            <person name="Haugen E."/>
            <person name="Heath P.D."/>
            <person name="Holmes S."/>
            <person name="Holt K."/>
            <person name="Howden P.J."/>
            <person name="Hunt A.R."/>
            <person name="Hunt S.E."/>
            <person name="Hunter G."/>
            <person name="Isherwood J."/>
            <person name="James R."/>
            <person name="Johnson C."/>
            <person name="Johnson D."/>
            <person name="Joy A."/>
            <person name="Kay M."/>
            <person name="Kershaw J.K."/>
            <person name="Kibukawa M."/>
            <person name="Kimberley A.M."/>
            <person name="King A."/>
            <person name="Knights A.J."/>
            <person name="Lad H."/>
            <person name="Laird G."/>
            <person name="Lawlor S."/>
            <person name="Leongamornlert D.A."/>
            <person name="Lloyd D.M."/>
            <person name="Loveland J."/>
            <person name="Lovell J."/>
            <person name="Lush M.J."/>
            <person name="Lyne R."/>
            <person name="Martin S."/>
            <person name="Mashreghi-Mohammadi M."/>
            <person name="Matthews L."/>
            <person name="Matthews N.S.W."/>
            <person name="McLaren S."/>
            <person name="Milne S."/>
            <person name="Mistry S."/>
            <person name="Moore M.J.F."/>
            <person name="Nickerson T."/>
            <person name="O'Dell C.N."/>
            <person name="Oliver K."/>
            <person name="Palmeiri A."/>
            <person name="Palmer S.A."/>
            <person name="Parker A."/>
            <person name="Patel D."/>
            <person name="Pearce A.V."/>
            <person name="Peck A.I."/>
            <person name="Pelan S."/>
            <person name="Phelps K."/>
            <person name="Phillimore B.J."/>
            <person name="Plumb R."/>
            <person name="Rajan J."/>
            <person name="Raymond C."/>
            <person name="Rouse G."/>
            <person name="Saenphimmachak C."/>
            <person name="Sehra H.K."/>
            <person name="Sheridan E."/>
            <person name="Shownkeen R."/>
            <person name="Sims S."/>
            <person name="Skuce C.D."/>
            <person name="Smith M."/>
            <person name="Steward C."/>
            <person name="Subramanian S."/>
            <person name="Sycamore N."/>
            <person name="Tracey A."/>
            <person name="Tromans A."/>
            <person name="Van Helmond Z."/>
            <person name="Wall M."/>
            <person name="Wallis J.M."/>
            <person name="White S."/>
            <person name="Whitehead S.L."/>
            <person name="Wilkinson J.E."/>
            <person name="Willey D.L."/>
            <person name="Williams H."/>
            <person name="Wilming L."/>
            <person name="Wray P.W."/>
            <person name="Wu Z."/>
            <person name="Coulson A."/>
            <person name="Vaudin M."/>
            <person name="Sulston J.E."/>
            <person name="Durbin R.M."/>
            <person name="Hubbard T."/>
            <person name="Wooster R."/>
            <person name="Dunham I."/>
            <person name="Carter N.P."/>
            <person name="McVean G."/>
            <person name="Ross M.T."/>
            <person name="Harrow J."/>
            <person name="Olson M.V."/>
            <person name="Beck S."/>
            <person name="Rogers J."/>
            <person name="Bentley D.R."/>
        </authorList>
    </citation>
    <scope>NUCLEOTIDE SEQUENCE [LARGE SCALE GENOMIC DNA]</scope>
</reference>
<reference key="5">
    <citation type="journal article" date="2004" name="Genome Res.">
        <title>The status, quality, and expansion of the NIH full-length cDNA project: the Mammalian Gene Collection (MGC).</title>
        <authorList>
            <consortium name="The MGC Project Team"/>
        </authorList>
    </citation>
    <scope>NUCLEOTIDE SEQUENCE [LARGE SCALE MRNA]</scope>
    <source>
        <tissue>Muscle</tissue>
    </source>
</reference>
<reference key="6">
    <citation type="submission" date="2001-02" db="EMBL/GenBank/DDBJ databases">
        <authorList>
            <person name="Muraki T."/>
            <person name="Nakamura K."/>
            <person name="Sakai T."/>
        </authorList>
    </citation>
    <scope>NUCLEOTIDE SEQUENCE [MRNA] OF 23-390</scope>
    <source>
        <tissue>Placenta</tissue>
    </source>
</reference>
<reference key="7">
    <citation type="journal article" date="2001" name="Am. J. Hum. Genet.">
        <title>Syndromic short stature in patients with a germline mutation in the LIM homeobox LHX4.</title>
        <authorList>
            <person name="Machinis K."/>
            <person name="Pantel J."/>
            <person name="Netchine I."/>
            <person name="Leger J."/>
            <person name="Camand O.J.A."/>
            <person name="Sobrier M.-L."/>
            <person name="Dastot-Le Moal F."/>
            <person name="Duquesnoy P."/>
            <person name="Abitbol M."/>
            <person name="Czernichow P."/>
            <person name="Amselem S."/>
        </authorList>
    </citation>
    <scope>NUCLEOTIDE SEQUENCE [MRNA] OF 24-390</scope>
    <scope>NUCLEOTIDE SEQUENCE [GENOMIC DNA] OF 152-390</scope>
    <scope>DISEASE</scope>
</reference>
<reference evidence="11" key="8">
    <citation type="journal article" date="2017" name="Science">
        <title>Impact of cytosine methylation on DNA binding specificities of human transcription factors.</title>
        <authorList>
            <person name="Yin Y."/>
            <person name="Morgunova E."/>
            <person name="Jolma A."/>
            <person name="Kaasinen E."/>
            <person name="Sahu B."/>
            <person name="Khund-Sayeed S."/>
            <person name="Das P.K."/>
            <person name="Kivioja T."/>
            <person name="Dave K."/>
            <person name="Zhong F."/>
            <person name="Nitta K.R."/>
            <person name="Taipale M."/>
            <person name="Popov A."/>
            <person name="Ginno P.A."/>
            <person name="Domcke S."/>
            <person name="Yan J."/>
            <person name="Schubeler D."/>
            <person name="Vinson C."/>
            <person name="Taipale J."/>
        </authorList>
    </citation>
    <scope>X-RAY CRYSTALLOGRAPHY (2.68 ANGSTROMS) OF 156-216 IN COMPLEX WITH DNA</scope>
    <scope>DNA-BINDING</scope>
</reference>
<reference key="9">
    <citation type="journal article" date="2007" name="Endocr. J.">
        <title>A novel missense mutation (P366T) of the LHX4 gene causes severe combined pituitary hormone deficiency with pituitary hypoplasia, ectopic posterior lobe and a poorly developed sella turcica.</title>
        <authorList>
            <person name="Tajima T."/>
            <person name="Hattori T."/>
            <person name="Nakajima T."/>
            <person name="Okuhara K."/>
            <person name="Tsubaki J."/>
            <person name="Fujieda K."/>
        </authorList>
    </citation>
    <scope>VARIANT CPHD4 THR-389</scope>
</reference>
<reference key="10">
    <citation type="journal article" date="2008" name="J. Clin. Endocrinol. Metab.">
        <title>Three novel missense mutations within the LHX4 gene are associated with variable pituitary hormone deficiencies.</title>
        <authorList>
            <person name="Pfaeffle R.W."/>
            <person name="Hunter C.S."/>
            <person name="Savage J.J."/>
            <person name="Duran-Prado M."/>
            <person name="Mullen R.D."/>
            <person name="Neeb Z.P."/>
            <person name="Eiholzer U."/>
            <person name="Hesse V."/>
            <person name="Haddad N.G."/>
            <person name="Stobbe H.M."/>
            <person name="Blum W.F."/>
            <person name="Weigel J.F.W."/>
            <person name="Rhodes S.J."/>
        </authorList>
    </citation>
    <scope>VARIANTS CPHD4 CYS-84; ARG-190 AND PRO-210</scope>
    <scope>CHARACTERIZATION OF VARIANTS CPHD4 CYS-84; ARG-190 AND PRO-210</scope>
</reference>
<evidence type="ECO:0000250" key="1"/>
<evidence type="ECO:0000255" key="2">
    <source>
        <dbReference type="PROSITE-ProRule" id="PRU00108"/>
    </source>
</evidence>
<evidence type="ECO:0000255" key="3">
    <source>
        <dbReference type="PROSITE-ProRule" id="PRU00125"/>
    </source>
</evidence>
<evidence type="ECO:0000256" key="4">
    <source>
        <dbReference type="SAM" id="MobiDB-lite"/>
    </source>
</evidence>
<evidence type="ECO:0000269" key="5">
    <source>
    </source>
</evidence>
<evidence type="ECO:0000269" key="6">
    <source>
    </source>
</evidence>
<evidence type="ECO:0000269" key="7">
    <source>
    </source>
</evidence>
<evidence type="ECO:0000269" key="8">
    <source>
    </source>
</evidence>
<evidence type="ECO:0000305" key="9"/>
<evidence type="ECO:0000305" key="10">
    <source>
    </source>
</evidence>
<evidence type="ECO:0007744" key="11">
    <source>
        <dbReference type="PDB" id="5HOD"/>
    </source>
</evidence>
<evidence type="ECO:0007829" key="12">
    <source>
        <dbReference type="PDB" id="5HOD"/>
    </source>
</evidence>
<keyword id="KW-0002">3D-structure</keyword>
<keyword id="KW-0160">Chromosomal rearrangement</keyword>
<keyword id="KW-0225">Disease variant</keyword>
<keyword id="KW-0238">DNA-binding</keyword>
<keyword id="KW-0242">Dwarfism</keyword>
<keyword id="KW-0371">Homeobox</keyword>
<keyword id="KW-0440">LIM domain</keyword>
<keyword id="KW-0479">Metal-binding</keyword>
<keyword id="KW-0539">Nucleus</keyword>
<keyword id="KW-1267">Proteomics identification</keyword>
<keyword id="KW-0656">Proto-oncogene</keyword>
<keyword id="KW-1185">Reference proteome</keyword>
<keyword id="KW-0677">Repeat</keyword>
<keyword id="KW-0804">Transcription</keyword>
<keyword id="KW-0805">Transcription regulation</keyword>
<keyword id="KW-0862">Zinc</keyword>
<feature type="chain" id="PRO_0000075787" description="LIM/homeobox protein Lhx4">
    <location>
        <begin position="1"/>
        <end position="390"/>
    </location>
</feature>
<feature type="domain" description="LIM zinc-binding 1" evidence="3">
    <location>
        <begin position="28"/>
        <end position="87"/>
    </location>
</feature>
<feature type="domain" description="LIM zinc-binding 2" evidence="3">
    <location>
        <begin position="88"/>
        <end position="150"/>
    </location>
</feature>
<feature type="DNA-binding region" description="Homeobox" evidence="2">
    <location>
        <begin position="157"/>
        <end position="216"/>
    </location>
</feature>
<feature type="region of interest" description="Interaction with DNA" evidence="10">
    <location>
        <begin position="161"/>
        <end position="181"/>
    </location>
</feature>
<feature type="region of interest" description="Interaction with 5-mCpG DNA" evidence="10">
    <location>
        <begin position="199"/>
        <end position="211"/>
    </location>
</feature>
<feature type="region of interest" description="Disordered" evidence="4">
    <location>
        <begin position="230"/>
        <end position="253"/>
    </location>
</feature>
<feature type="region of interest" description="Disordered" evidence="4">
    <location>
        <begin position="356"/>
        <end position="390"/>
    </location>
</feature>
<feature type="sequence variant" id="VAR_058715" description="In CPHD4; has impaired activity on CGA, POU1F1 and TSHB promoters but exhibits normal DNA binding to the CGA pituitary glycoprotein basal element (PGBE) and interaction with the POU1F1 protein; dbSNP:rs121912642." evidence="7">
    <original>R</original>
    <variation>C</variation>
    <location>
        <position position="84"/>
    </location>
</feature>
<feature type="sequence variant" id="VAR_058716" description="In CPHD4; the mutant protein is inactive in DNA binding and pituitary gene activation assays; dbSNP:rs121912643." evidence="7">
    <original>L</original>
    <variation>R</variation>
    <location>
        <position position="190"/>
    </location>
</feature>
<feature type="sequence variant" id="VAR_058717" description="In CPHD4; the mutant protein is inactive in DNA binding and pituitary gene activation assays; dbSNP:rs121912641." evidence="7">
    <original>A</original>
    <variation>P</variation>
    <location>
        <position position="210"/>
    </location>
</feature>
<feature type="sequence variant" id="VAR_046661" description="In dbSNP:rs7536561.">
    <original>N</original>
    <variation>S</variation>
    <location>
        <position position="328"/>
    </location>
</feature>
<feature type="sequence variant" id="VAR_063241" description="In CPHD4; dbSNP:rs145433128." evidence="6">
    <original>P</original>
    <variation>T</variation>
    <location>
        <position position="389"/>
    </location>
</feature>
<feature type="sequence conflict" description="In Ref. 1; AAL07260." evidence="9" ref="1">
    <original>D</original>
    <variation>G</variation>
    <location>
        <position position="335"/>
    </location>
</feature>
<feature type="helix" evidence="12">
    <location>
        <begin position="165"/>
        <end position="176"/>
    </location>
</feature>
<feature type="helix" evidence="12">
    <location>
        <begin position="184"/>
        <end position="194"/>
    </location>
</feature>
<feature type="helix" evidence="12">
    <location>
        <begin position="198"/>
        <end position="214"/>
    </location>
</feature>
<protein>
    <recommendedName>
        <fullName>LIM/homeobox protein Lhx4</fullName>
        <shortName>LIM homeobox protein 4</shortName>
    </recommendedName>
</protein>
<sequence>MMQSATVPAEGAVKGLPEMLGVPMQQIPQCAGCNQHILDKFILKVLDRHWHSSCLKCADCQMQLADRCFSRAGSVYCKEDFFKRFGTKCTACQQGIPPTQVVRKAQDFVYHLHCFACIICNRQLATGDEFYLMEDGRLVCKEDYETAKQNDDSEAGAKRPRTTITAKQLETLKNAYKNSPKPARHVREQLSSETGLDMRVVQVWFQNRRAKEKRLKKDAGRHRWGQFYKSVKRSRGSSKQEKESSAEDCGVSDSELSFREDQILSELGHTNRIYGNVGDVTGGQLMNGSFSMDGTGQSYQDLRDGSPYGIPQSPSSISSLPSHAPLLNGLDYTVDSNLGIIAHAGQGVSQTLRAMAGGPTSDISTGSSVGYPDFPTSPGSWLDEMDHPPF</sequence>
<name>LHX4_HUMAN</name>
<accession>Q969G2</accession>
<accession>Q8NHE0</accession>
<accession>Q8NHM1</accession>
<accession>Q8TCJ1</accession>
<accession>Q8WWX2</accession>
<accession>Q969W2</accession>